<comment type="function">
    <text evidence="4">FAD-dependent monooxygenase; part of the gene cluster that mediates the biosynthesis of azaphilones, a class of fungal metabolites characterized by a highly oxygenated pyrano-quinone bicyclic core and exhibiting a broad range of bioactivities (PubMed:22921072). In the first step, the non-reducing polyketide synthase azaA forms the hexaketide precursor from successive condensations of five malonyl-CoA units, presumably with a simple acetyl-CoA starter unit (PubMed:22921072). The reactive polyketide chain then undergoes a PT-mediated C2-C7 cyclization to afford the aromatic ring and is eventually released as an aldehyde through the R-domain (PubMed:22921072). The putative ketoreductase azaE is proposed to catalyze the reduction of the terminal ketone resulting in the early culture product FK17-P2a (PubMed:22921072). The monooxygenase azaH was demonstrated to be the only enzyme required to convert FK17-P2a to azanigerone E (PubMed:22921072). AzaH first hydroxylates the benzaldehyde intermediate FK17-P2a at C4, which triggers the formation of the pyran-ring to afford azanigerone E (PubMed:22921072). In parallel, the 2,4-dimethylhexanoyl chain is synthesized by the HR-PKS azaB and is proposed to be transferred to the C4-hydroxyl of azanigerone E by the acyltransferase azaD directly from the ACP domain of azaB (PubMed:22921072). Alternatively, the 2,4-dimethyl-hexanoyl chain may be offloaded from the HR-PKS as a carboxylic acid and converted to an acyl-CoA by azaF (PubMed:22921072). The resulting acyl-CoA molecule could then be taken up as a substrate by AzaD to form azanigerone B (PubMed:22921072). To yield the carboxylic acid substituent in azanigerone A, the hydroxypropyl side chain of azanigerone B would need to undergo a C-C oxidative cleavage catalyzed by cytochrome P450 AzaI (PubMed:22921072). AzaI is proposed to act on a vicinal diol that leads to a C-C bond scission either through an alkoxyradical intermediate or a peroxy complex (PubMed:22921072). In the biosynthesis of azanigerone A, azanigerone B first undergoes hydroxylation at C10, possibly catalyzed by one of the two FAD-dependent monooxygenases encoded in the cluster, azaG or azaL, resulting in the vicinal diol azanigerone C (PubMed:22921072). Oxidative cleavage of azanigerone C by azaI would yield the corresponding aldehyde derivative of azanigerone A (PubMed:22921072). Finally, the dehydrogenase azaJ is proposed to convert the aldehyde functional group into the carboxylic acid, completing the conversion from azanigerone B to azanigerone A (PubMed:22921072). Alternatively, the oxidation of aldehyde to carboxylic acid may be catalyzed by the same P450 enzyme azaI via consecutive oxidation or by endogenous alcohol dehydrogenase (PubMed:22921072).</text>
</comment>
<comment type="cofactor">
    <cofactor evidence="6">
        <name>FAD</name>
        <dbReference type="ChEBI" id="CHEBI:57692"/>
    </cofactor>
</comment>
<comment type="pathway">
    <text evidence="4">Secondary metabolite biosynthesis.</text>
</comment>
<comment type="subcellular location">
    <subcellularLocation>
        <location evidence="2">Membrane</location>
        <topology evidence="2">Single-pass membrane protein</topology>
    </subcellularLocation>
</comment>
<comment type="induction">
    <text evidence="4">Expression is under the control of the azaphilone cluster-specific transcription factor azaR (PubMed:22921072).</text>
</comment>
<comment type="similarity">
    <text evidence="6">Belongs to the paxM FAD-dependent monooxygenase family.</text>
</comment>
<reference key="1">
    <citation type="journal article" date="2011" name="Genome Res.">
        <title>Comparative genomics of citric-acid-producing Aspergillus niger ATCC 1015 versus enzyme-producing CBS 513.88.</title>
        <authorList>
            <person name="Andersen M.R."/>
            <person name="Salazar M.P."/>
            <person name="Schaap P.J."/>
            <person name="van de Vondervoort P.J.I."/>
            <person name="Culley D."/>
            <person name="Thykaer J."/>
            <person name="Frisvad J.C."/>
            <person name="Nielsen K.F."/>
            <person name="Albang R."/>
            <person name="Albermann K."/>
            <person name="Berka R.M."/>
            <person name="Braus G.H."/>
            <person name="Braus-Stromeyer S.A."/>
            <person name="Corrochano L.M."/>
            <person name="Dai Z."/>
            <person name="van Dijck P.W.M."/>
            <person name="Hofmann G."/>
            <person name="Lasure L.L."/>
            <person name="Magnuson J.K."/>
            <person name="Menke H."/>
            <person name="Meijer M."/>
            <person name="Meijer S.L."/>
            <person name="Nielsen J.B."/>
            <person name="Nielsen M.L."/>
            <person name="van Ooyen A.J.J."/>
            <person name="Pel H.J."/>
            <person name="Poulsen L."/>
            <person name="Samson R.A."/>
            <person name="Stam H."/>
            <person name="Tsang A."/>
            <person name="van den Brink J.M."/>
            <person name="Atkins A."/>
            <person name="Aerts A."/>
            <person name="Shapiro H."/>
            <person name="Pangilinan J."/>
            <person name="Salamov A."/>
            <person name="Lou Y."/>
            <person name="Lindquist E."/>
            <person name="Lucas S."/>
            <person name="Grimwood J."/>
            <person name="Grigoriev I.V."/>
            <person name="Kubicek C.P."/>
            <person name="Martinez D."/>
            <person name="van Peij N.N.M.E."/>
            <person name="Roubos J.A."/>
            <person name="Nielsen J."/>
            <person name="Baker S.E."/>
        </authorList>
    </citation>
    <scope>NUCLEOTIDE SEQUENCE [LARGE SCALE GENOMIC DNA]</scope>
    <source>
        <strain>ATCC 1015 / CBS 113.46 / FGSC A1144 / LSHB Ac4 / NCTC 3858a / NRRL 328 / USDA 3528.7</strain>
    </source>
</reference>
<reference key="2">
    <citation type="journal article" date="2012" name="Chem. Biol.">
        <title>Characterization of a silent azaphilone gene cluster from Aspergillus niger ATCC 1015 reveals a hydroxylation-mediated pyran-ring formation.</title>
        <authorList>
            <person name="Zabala A.O."/>
            <person name="Xu W."/>
            <person name="Chooi Y.H."/>
            <person name="Tang Y."/>
        </authorList>
    </citation>
    <scope>FUNCTION</scope>
    <scope>CATALYTIC ACTIVITY</scope>
    <scope>INDUCTION</scope>
</reference>
<dbReference type="EC" id="1.-.-.-" evidence="7"/>
<dbReference type="EMBL" id="ACJE01000001">
    <property type="protein sequence ID" value="EHA28235.1"/>
    <property type="molecule type" value="Genomic_DNA"/>
</dbReference>
<dbReference type="SMR" id="G3XMC2"/>
<dbReference type="STRING" id="380704.G3XMC2"/>
<dbReference type="GlyCosmos" id="G3XMC2">
    <property type="glycosylation" value="2 sites, No reported glycans"/>
</dbReference>
<dbReference type="HOGENOM" id="CLU_009665_6_3_1"/>
<dbReference type="OrthoDB" id="93164at5052"/>
<dbReference type="Proteomes" id="UP000009038">
    <property type="component" value="Unassembled WGS sequence"/>
</dbReference>
<dbReference type="GO" id="GO:0016020">
    <property type="term" value="C:membrane"/>
    <property type="evidence" value="ECO:0007669"/>
    <property type="project" value="UniProtKB-SubCell"/>
</dbReference>
<dbReference type="GO" id="GO:0071949">
    <property type="term" value="F:FAD binding"/>
    <property type="evidence" value="ECO:0007669"/>
    <property type="project" value="InterPro"/>
</dbReference>
<dbReference type="GO" id="GO:0004497">
    <property type="term" value="F:monooxygenase activity"/>
    <property type="evidence" value="ECO:0007669"/>
    <property type="project" value="UniProtKB-KW"/>
</dbReference>
<dbReference type="GO" id="GO:0044550">
    <property type="term" value="P:secondary metabolite biosynthetic process"/>
    <property type="evidence" value="ECO:0007669"/>
    <property type="project" value="TreeGrafter"/>
</dbReference>
<dbReference type="FunFam" id="3.50.50.60:FF:000153">
    <property type="entry name" value="Salicylate hydroxylase, putative"/>
    <property type="match status" value="1"/>
</dbReference>
<dbReference type="Gene3D" id="3.50.50.60">
    <property type="entry name" value="FAD/NAD(P)-binding domain"/>
    <property type="match status" value="1"/>
</dbReference>
<dbReference type="InterPro" id="IPR002938">
    <property type="entry name" value="FAD-bd"/>
</dbReference>
<dbReference type="InterPro" id="IPR036188">
    <property type="entry name" value="FAD/NAD-bd_sf"/>
</dbReference>
<dbReference type="InterPro" id="IPR051104">
    <property type="entry name" value="FAD_monoxygenase"/>
</dbReference>
<dbReference type="PANTHER" id="PTHR46720:SF3">
    <property type="entry name" value="FAD-BINDING DOMAIN-CONTAINING PROTEIN-RELATED"/>
    <property type="match status" value="1"/>
</dbReference>
<dbReference type="PANTHER" id="PTHR46720">
    <property type="entry name" value="HYDROXYLASE, PUTATIVE (AFU_ORTHOLOGUE AFUA_3G01460)-RELATED"/>
    <property type="match status" value="1"/>
</dbReference>
<dbReference type="Pfam" id="PF01494">
    <property type="entry name" value="FAD_binding_3"/>
    <property type="match status" value="1"/>
</dbReference>
<dbReference type="PRINTS" id="PR00420">
    <property type="entry name" value="RNGMNOXGNASE"/>
</dbReference>
<dbReference type="SUPFAM" id="SSF54373">
    <property type="entry name" value="FAD-linked reductases, C-terminal domain"/>
    <property type="match status" value="1"/>
</dbReference>
<dbReference type="SUPFAM" id="SSF51905">
    <property type="entry name" value="FAD/NAD(P)-binding domain"/>
    <property type="match status" value="1"/>
</dbReference>
<organism>
    <name type="scientific">Aspergillus niger (strain ATCC 1015 / CBS 113.46 / FGSC A1144 / LSHB Ac4 / NCTC 3858a / NRRL 328 / USDA 3528.7)</name>
    <dbReference type="NCBI Taxonomy" id="380704"/>
    <lineage>
        <taxon>Eukaryota</taxon>
        <taxon>Fungi</taxon>
        <taxon>Dikarya</taxon>
        <taxon>Ascomycota</taxon>
        <taxon>Pezizomycotina</taxon>
        <taxon>Eurotiomycetes</taxon>
        <taxon>Eurotiomycetidae</taxon>
        <taxon>Eurotiales</taxon>
        <taxon>Aspergillaceae</taxon>
        <taxon>Aspergillus</taxon>
        <taxon>Aspergillus subgen. Circumdati</taxon>
    </lineage>
</organism>
<sequence length="429" mass="46781">MSTDSIEVAIIGAGITGITLALGLLSRGIPVRVYERARDFHEIGAGIGFTPNAEWAMKVVDPRIQAAFKRVATPNASDWFQWVDGFNESGTDPRETEEQLLFKIYLGERGFEGCHRADFLGELARLLPEGVVTFQKALDTVEPAADNSLGQLLRFQDGTTATAHAVIGCDGIRSRVRQILLGEDHPTASAHYSHKYAARGLIPMDRAREALGEDKVATRFMHLGPDAHALTFPVSHGSLLNVVAFVTDPNPWPYADRWTAQGPKKDVTAAFSRFGPTMRTIIDLLPDPIDQWAVFDTYDHPPNTYSRGAVCIAGDAAHAAAPHHGAGAGCGVEDAAVLCAVLHMAAKKVNTAKTGSEGKAALITAAFETYDSVCRERAQWLVESSRVIGNLCHDEVYWRSHRIWDYDIDAMMRETAEVFEAQVAGVARN</sequence>
<evidence type="ECO:0000250" key="1">
    <source>
        <dbReference type="UniProtKB" id="B8M9J8"/>
    </source>
</evidence>
<evidence type="ECO:0000255" key="2"/>
<evidence type="ECO:0000255" key="3">
    <source>
        <dbReference type="PROSITE-ProRule" id="PRU00498"/>
    </source>
</evidence>
<evidence type="ECO:0000269" key="4">
    <source>
    </source>
</evidence>
<evidence type="ECO:0000303" key="5">
    <source>
    </source>
</evidence>
<evidence type="ECO:0000305" key="6"/>
<evidence type="ECO:0000305" key="7">
    <source>
    </source>
</evidence>
<name>AZAH_ASPNA</name>
<feature type="chain" id="PRO_0000437605" description="FAD-dependent monooxygenase azaH">
    <location>
        <begin position="1"/>
        <end position="429"/>
    </location>
</feature>
<feature type="transmembrane region" description="Helical" evidence="2">
    <location>
        <begin position="5"/>
        <end position="25"/>
    </location>
</feature>
<feature type="active site" evidence="1">
    <location>
        <position position="199"/>
    </location>
</feature>
<feature type="binding site" evidence="1">
    <location>
        <position position="35"/>
    </location>
    <ligand>
        <name>FAD</name>
        <dbReference type="ChEBI" id="CHEBI:57692"/>
    </ligand>
</feature>
<feature type="binding site" evidence="1">
    <location>
        <position position="48"/>
    </location>
    <ligand>
        <name>FAD</name>
        <dbReference type="ChEBI" id="CHEBI:57692"/>
    </ligand>
</feature>
<feature type="binding site" evidence="1">
    <location>
        <position position="116"/>
    </location>
    <ligand>
        <name>FAD</name>
        <dbReference type="ChEBI" id="CHEBI:57692"/>
    </ligand>
</feature>
<feature type="binding site" evidence="1">
    <location>
        <position position="315"/>
    </location>
    <ligand>
        <name>FAD</name>
        <dbReference type="ChEBI" id="CHEBI:57692"/>
    </ligand>
</feature>
<feature type="binding site" evidence="1">
    <location>
        <position position="328"/>
    </location>
    <ligand>
        <name>FAD</name>
        <dbReference type="ChEBI" id="CHEBI:57692"/>
    </ligand>
</feature>
<feature type="glycosylation site" description="N-linked (GlcNAc...) asparagine" evidence="3">
    <location>
        <position position="75"/>
    </location>
</feature>
<feature type="glycosylation site" description="N-linked (GlcNAc...) asparagine" evidence="3">
    <location>
        <position position="87"/>
    </location>
</feature>
<gene>
    <name evidence="5" type="primary">azaH</name>
    <name type="ORF">ASPNIDRAFT_188800</name>
</gene>
<protein>
    <recommendedName>
        <fullName evidence="5">FAD-dependent monooxygenase azaH</fullName>
        <ecNumber evidence="7">1.-.-.-</ecNumber>
    </recommendedName>
    <alternativeName>
        <fullName evidence="5">Azaphilone biosynthesis cluster protein azaH</fullName>
    </alternativeName>
</protein>
<proteinExistence type="evidence at protein level"/>
<keyword id="KW-0274">FAD</keyword>
<keyword id="KW-0285">Flavoprotein</keyword>
<keyword id="KW-0325">Glycoprotein</keyword>
<keyword id="KW-0472">Membrane</keyword>
<keyword id="KW-0503">Monooxygenase</keyword>
<keyword id="KW-0560">Oxidoreductase</keyword>
<keyword id="KW-0812">Transmembrane</keyword>
<keyword id="KW-1133">Transmembrane helix</keyword>
<accession>G3XMC2</accession>